<protein>
    <recommendedName>
        <fullName evidence="1">UPF0299 membrane protein YPTB1529</fullName>
    </recommendedName>
</protein>
<dbReference type="EMBL" id="BX936398">
    <property type="protein sequence ID" value="CAH20768.1"/>
    <property type="molecule type" value="Genomic_DNA"/>
</dbReference>
<dbReference type="RefSeq" id="WP_002211971.1">
    <property type="nucleotide sequence ID" value="NZ_CP009712.1"/>
</dbReference>
<dbReference type="SMR" id="Q66C77"/>
<dbReference type="KEGG" id="ypo:BZ17_986"/>
<dbReference type="KEGG" id="yps:YPTB1529"/>
<dbReference type="PATRIC" id="fig|273123.14.peg.1046"/>
<dbReference type="Proteomes" id="UP000001011">
    <property type="component" value="Chromosome"/>
</dbReference>
<dbReference type="GO" id="GO:0005886">
    <property type="term" value="C:plasma membrane"/>
    <property type="evidence" value="ECO:0007669"/>
    <property type="project" value="UniProtKB-SubCell"/>
</dbReference>
<dbReference type="HAMAP" id="MF_01144">
    <property type="entry name" value="UPF0299"/>
    <property type="match status" value="1"/>
</dbReference>
<dbReference type="InterPro" id="IPR005538">
    <property type="entry name" value="LrgA/CidA"/>
</dbReference>
<dbReference type="InterPro" id="IPR022957">
    <property type="entry name" value="Uncharacterised_UPF0299"/>
</dbReference>
<dbReference type="NCBIfam" id="NF002494">
    <property type="entry name" value="PRK01821.1"/>
    <property type="match status" value="1"/>
</dbReference>
<dbReference type="PANTHER" id="PTHR33931">
    <property type="entry name" value="HOLIN-LIKE PROTEIN CIDA-RELATED"/>
    <property type="match status" value="1"/>
</dbReference>
<dbReference type="PANTHER" id="PTHR33931:SF5">
    <property type="entry name" value="UPF0299 MEMBRANE PROTEIN YOHJ"/>
    <property type="match status" value="1"/>
</dbReference>
<dbReference type="Pfam" id="PF03788">
    <property type="entry name" value="LrgA"/>
    <property type="match status" value="1"/>
</dbReference>
<sequence length="135" mass="15294">MRNMMSLCWQYLRAFTIIYLCLWAGKALALLLPIVIPGSIIGMLILFVLLTLQILPSPWVKPSCQLLIRYMALLFVPIGVGVMQYYEQLTKQFGPIVVSCFISTLIVMLVVAYSSHYVHRDRKVISPSTPTEGEK</sequence>
<reference key="1">
    <citation type="journal article" date="2004" name="Proc. Natl. Acad. Sci. U.S.A.">
        <title>Insights into the evolution of Yersinia pestis through whole-genome comparison with Yersinia pseudotuberculosis.</title>
        <authorList>
            <person name="Chain P.S.G."/>
            <person name="Carniel E."/>
            <person name="Larimer F.W."/>
            <person name="Lamerdin J."/>
            <person name="Stoutland P.O."/>
            <person name="Regala W.M."/>
            <person name="Georgescu A.M."/>
            <person name="Vergez L.M."/>
            <person name="Land M.L."/>
            <person name="Motin V.L."/>
            <person name="Brubaker R.R."/>
            <person name="Fowler J."/>
            <person name="Hinnebusch J."/>
            <person name="Marceau M."/>
            <person name="Medigue C."/>
            <person name="Simonet M."/>
            <person name="Chenal-Francisque V."/>
            <person name="Souza B."/>
            <person name="Dacheux D."/>
            <person name="Elliott J.M."/>
            <person name="Derbise A."/>
            <person name="Hauser L.J."/>
            <person name="Garcia E."/>
        </authorList>
    </citation>
    <scope>NUCLEOTIDE SEQUENCE [LARGE SCALE GENOMIC DNA]</scope>
    <source>
        <strain>IP32953</strain>
    </source>
</reference>
<keyword id="KW-0997">Cell inner membrane</keyword>
<keyword id="KW-1003">Cell membrane</keyword>
<keyword id="KW-0472">Membrane</keyword>
<keyword id="KW-0812">Transmembrane</keyword>
<keyword id="KW-1133">Transmembrane helix</keyword>
<proteinExistence type="inferred from homology"/>
<gene>
    <name type="ordered locus">YPTB1529</name>
</gene>
<comment type="subcellular location">
    <subcellularLocation>
        <location evidence="1">Cell inner membrane</location>
        <topology evidence="1">Multi-pass membrane protein</topology>
    </subcellularLocation>
</comment>
<comment type="similarity">
    <text evidence="1">Belongs to the UPF0299 family.</text>
</comment>
<feature type="chain" id="PRO_1000085047" description="UPF0299 membrane protein YPTB1529">
    <location>
        <begin position="1"/>
        <end position="135"/>
    </location>
</feature>
<feature type="transmembrane region" description="Helical" evidence="1">
    <location>
        <begin position="30"/>
        <end position="50"/>
    </location>
</feature>
<feature type="transmembrane region" description="Helical" evidence="1">
    <location>
        <begin position="66"/>
        <end position="86"/>
    </location>
</feature>
<feature type="transmembrane region" description="Helical" evidence="1">
    <location>
        <begin position="93"/>
        <end position="113"/>
    </location>
</feature>
<accession>Q66C77</accession>
<name>Y1529_YERPS</name>
<organism>
    <name type="scientific">Yersinia pseudotuberculosis serotype I (strain IP32953)</name>
    <dbReference type="NCBI Taxonomy" id="273123"/>
    <lineage>
        <taxon>Bacteria</taxon>
        <taxon>Pseudomonadati</taxon>
        <taxon>Pseudomonadota</taxon>
        <taxon>Gammaproteobacteria</taxon>
        <taxon>Enterobacterales</taxon>
        <taxon>Yersiniaceae</taxon>
        <taxon>Yersinia</taxon>
    </lineage>
</organism>
<evidence type="ECO:0000255" key="1">
    <source>
        <dbReference type="HAMAP-Rule" id="MF_01144"/>
    </source>
</evidence>